<comment type="function">
    <text evidence="1">Catalyzes the hydrolysis of N(2)-succinylarginine into N(2)-succinylornithine, ammonia and CO(2).</text>
</comment>
<comment type="catalytic activity">
    <reaction evidence="1">
        <text>N(2)-succinyl-L-arginine + 2 H2O + 2 H(+) = N(2)-succinyl-L-ornithine + 2 NH4(+) + CO2</text>
        <dbReference type="Rhea" id="RHEA:19533"/>
        <dbReference type="ChEBI" id="CHEBI:15377"/>
        <dbReference type="ChEBI" id="CHEBI:15378"/>
        <dbReference type="ChEBI" id="CHEBI:16526"/>
        <dbReference type="ChEBI" id="CHEBI:28938"/>
        <dbReference type="ChEBI" id="CHEBI:58241"/>
        <dbReference type="ChEBI" id="CHEBI:58514"/>
        <dbReference type="EC" id="3.5.3.23"/>
    </reaction>
</comment>
<comment type="pathway">
    <text evidence="1">Amino-acid degradation; L-arginine degradation via AST pathway; L-glutamate and succinate from L-arginine: step 2/5.</text>
</comment>
<comment type="subunit">
    <text evidence="1">Homodimer.</text>
</comment>
<comment type="induction">
    <text evidence="2">By nitrogen and carbon starvation, and arginine, via the ArgR and Crp transcriptional regulators.</text>
</comment>
<comment type="similarity">
    <text evidence="1">Belongs to the succinylarginine dihydrolase family.</text>
</comment>
<keyword id="KW-0056">Arginine metabolism</keyword>
<keyword id="KW-0378">Hydrolase</keyword>
<keyword id="KW-1185">Reference proteome</keyword>
<feature type="chain" id="PRO_0000262373" description="N-succinylarginine dihydrolase">
    <location>
        <begin position="1"/>
        <end position="447"/>
    </location>
</feature>
<feature type="active site" evidence="1">
    <location>
        <position position="174"/>
    </location>
</feature>
<feature type="active site" evidence="1">
    <location>
        <position position="248"/>
    </location>
</feature>
<feature type="active site" description="Nucleophile" evidence="1">
    <location>
        <position position="365"/>
    </location>
</feature>
<feature type="binding site" evidence="1">
    <location>
        <begin position="19"/>
        <end position="28"/>
    </location>
    <ligand>
        <name>substrate</name>
    </ligand>
</feature>
<feature type="binding site" evidence="1">
    <location>
        <position position="110"/>
    </location>
    <ligand>
        <name>substrate</name>
    </ligand>
</feature>
<feature type="binding site" evidence="1">
    <location>
        <begin position="137"/>
        <end position="138"/>
    </location>
    <ligand>
        <name>substrate</name>
    </ligand>
</feature>
<feature type="binding site" evidence="1">
    <location>
        <position position="212"/>
    </location>
    <ligand>
        <name>substrate</name>
    </ligand>
</feature>
<feature type="binding site" evidence="1">
    <location>
        <position position="250"/>
    </location>
    <ligand>
        <name>substrate</name>
    </ligand>
</feature>
<feature type="binding site" evidence="1">
    <location>
        <position position="359"/>
    </location>
    <ligand>
        <name>substrate</name>
    </ligand>
</feature>
<reference key="1">
    <citation type="journal article" date="2001" name="Nature">
        <title>Complete genome sequence of Salmonella enterica serovar Typhimurium LT2.</title>
        <authorList>
            <person name="McClelland M."/>
            <person name="Sanderson K.E."/>
            <person name="Spieth J."/>
            <person name="Clifton S.W."/>
            <person name="Latreille P."/>
            <person name="Courtney L."/>
            <person name="Porwollik S."/>
            <person name="Ali J."/>
            <person name="Dante M."/>
            <person name="Du F."/>
            <person name="Hou S."/>
            <person name="Layman D."/>
            <person name="Leonard S."/>
            <person name="Nguyen C."/>
            <person name="Scott K."/>
            <person name="Holmes A."/>
            <person name="Grewal N."/>
            <person name="Mulvaney E."/>
            <person name="Ryan E."/>
            <person name="Sun H."/>
            <person name="Florea L."/>
            <person name="Miller W."/>
            <person name="Stoneking T."/>
            <person name="Nhan M."/>
            <person name="Waterston R."/>
            <person name="Wilson R.K."/>
        </authorList>
    </citation>
    <scope>NUCLEOTIDE SEQUENCE [LARGE SCALE GENOMIC DNA]</scope>
    <source>
        <strain>LT2 / SGSC1412 / ATCC 700720</strain>
    </source>
</reference>
<reference key="2">
    <citation type="journal article" date="1999" name="J. Bacteriol.">
        <title>Role of ArgR in activation of the ast operon, encoding enzymes of the arginine succinyltransferase pathway in Salmonella typhimurium.</title>
        <authorList>
            <person name="Lu C.-D."/>
            <person name="Abdelal A.T."/>
        </authorList>
    </citation>
    <scope>INDUCTION</scope>
</reference>
<organism>
    <name type="scientific">Salmonella typhimurium (strain LT2 / SGSC1412 / ATCC 700720)</name>
    <dbReference type="NCBI Taxonomy" id="99287"/>
    <lineage>
        <taxon>Bacteria</taxon>
        <taxon>Pseudomonadati</taxon>
        <taxon>Pseudomonadota</taxon>
        <taxon>Gammaproteobacteria</taxon>
        <taxon>Enterobacterales</taxon>
        <taxon>Enterobacteriaceae</taxon>
        <taxon>Salmonella</taxon>
    </lineage>
</organism>
<accession>Q8ZPU9</accession>
<sequence>MTAHEVNFDGLVGLTHHYAGLSFGNEASTRHRFQVSNPRLAVKQGLLKMKALADAGFPQAVIPPHERPFIPALRQLGFTGSDEQILDKVARQAPRWLSSVSSASPMWVANAATVCPSADALDGKVHLTVANLNNKFHRALEAPVTEALLRAIFRDESQFSVHSALPQVALLGDEGAANHNRLGGEYGSAGVQLFVYGREEENEIRPARYPARQSREASEAVARLNQVNPQQVIFAQQNPEVIDQGVFHNDVIAVSNRQVLFCHEAAFARQKVLINQLRTRVDGFMAIEVPAGEVSVSDAVATYLFNSQLLSRNDGLMLLVLPRECQDHVGVWRYLNKLVAEDNPISAMQVFDLRESMANGGGPACLRLRVVLTEEERRAVNPAVMMNDALFTALNAWADRYYRDRLTAADLADPLLLREGREALDVLTRLLDLGSVYPFQQTGAADG</sequence>
<proteinExistence type="evidence at transcript level"/>
<gene>
    <name evidence="1" type="primary">astB</name>
    <name type="ordered locus">STM1306</name>
</gene>
<protein>
    <recommendedName>
        <fullName evidence="1">N-succinylarginine dihydrolase</fullName>
        <ecNumber evidence="1">3.5.3.23</ecNumber>
    </recommendedName>
</protein>
<evidence type="ECO:0000255" key="1">
    <source>
        <dbReference type="HAMAP-Rule" id="MF_01172"/>
    </source>
</evidence>
<evidence type="ECO:0000269" key="2">
    <source>
    </source>
</evidence>
<dbReference type="EC" id="3.5.3.23" evidence="1"/>
<dbReference type="EMBL" id="AE006468">
    <property type="protein sequence ID" value="AAL20231.1"/>
    <property type="molecule type" value="Genomic_DNA"/>
</dbReference>
<dbReference type="RefSeq" id="NP_460272.1">
    <property type="nucleotide sequence ID" value="NC_003197.2"/>
</dbReference>
<dbReference type="RefSeq" id="WP_000123950.1">
    <property type="nucleotide sequence ID" value="NC_003197.2"/>
</dbReference>
<dbReference type="SMR" id="Q8ZPU9"/>
<dbReference type="STRING" id="99287.STM1306"/>
<dbReference type="PaxDb" id="99287-STM1306"/>
<dbReference type="GeneID" id="1252824"/>
<dbReference type="KEGG" id="stm:STM1306"/>
<dbReference type="PATRIC" id="fig|99287.12.peg.1388"/>
<dbReference type="HOGENOM" id="CLU_053835_0_0_6"/>
<dbReference type="PhylomeDB" id="Q8ZPU9"/>
<dbReference type="BioCyc" id="SENT99287:STM1306-MONOMER"/>
<dbReference type="UniPathway" id="UPA00185">
    <property type="reaction ID" value="UER00280"/>
</dbReference>
<dbReference type="Proteomes" id="UP000001014">
    <property type="component" value="Chromosome"/>
</dbReference>
<dbReference type="GO" id="GO:0009015">
    <property type="term" value="F:N-succinylarginine dihydrolase activity"/>
    <property type="evidence" value="ECO:0000318"/>
    <property type="project" value="GO_Central"/>
</dbReference>
<dbReference type="GO" id="GO:0006527">
    <property type="term" value="P:arginine catabolic process"/>
    <property type="evidence" value="ECO:0000318"/>
    <property type="project" value="GO_Central"/>
</dbReference>
<dbReference type="GO" id="GO:0019544">
    <property type="term" value="P:arginine catabolic process to glutamate"/>
    <property type="evidence" value="ECO:0007669"/>
    <property type="project" value="UniProtKB-UniRule"/>
</dbReference>
<dbReference type="GO" id="GO:0019545">
    <property type="term" value="P:arginine catabolic process to succinate"/>
    <property type="evidence" value="ECO:0007669"/>
    <property type="project" value="UniProtKB-UniRule"/>
</dbReference>
<dbReference type="FunFam" id="3.75.10.20:FF:000001">
    <property type="entry name" value="N-succinylarginine dihydrolase"/>
    <property type="match status" value="1"/>
</dbReference>
<dbReference type="Gene3D" id="3.75.10.20">
    <property type="entry name" value="Succinylarginine dihydrolase"/>
    <property type="match status" value="1"/>
</dbReference>
<dbReference type="HAMAP" id="MF_01172">
    <property type="entry name" value="AstB"/>
    <property type="match status" value="1"/>
</dbReference>
<dbReference type="InterPro" id="IPR037031">
    <property type="entry name" value="AstB_sf"/>
</dbReference>
<dbReference type="InterPro" id="IPR007079">
    <property type="entry name" value="SuccinylArg_d-Hdrlase_AstB"/>
</dbReference>
<dbReference type="NCBIfam" id="TIGR03241">
    <property type="entry name" value="arg_catab_astB"/>
    <property type="match status" value="1"/>
</dbReference>
<dbReference type="NCBIfam" id="NF009789">
    <property type="entry name" value="PRK13281.1"/>
    <property type="match status" value="1"/>
</dbReference>
<dbReference type="PANTHER" id="PTHR30420">
    <property type="entry name" value="N-SUCCINYLARGININE DIHYDROLASE"/>
    <property type="match status" value="1"/>
</dbReference>
<dbReference type="PANTHER" id="PTHR30420:SF2">
    <property type="entry name" value="N-SUCCINYLARGININE DIHYDROLASE"/>
    <property type="match status" value="1"/>
</dbReference>
<dbReference type="Pfam" id="PF04996">
    <property type="entry name" value="AstB"/>
    <property type="match status" value="1"/>
</dbReference>
<dbReference type="SUPFAM" id="SSF55909">
    <property type="entry name" value="Pentein"/>
    <property type="match status" value="1"/>
</dbReference>
<name>ASTB_SALTY</name>